<comment type="similarity">
    <text evidence="1">Belongs to the bacterial ribosomal protein bL33 family.</text>
</comment>
<proteinExistence type="inferred from homology"/>
<organism>
    <name type="scientific">Mycobacterium marinum (strain ATCC BAA-535 / M)</name>
    <dbReference type="NCBI Taxonomy" id="216594"/>
    <lineage>
        <taxon>Bacteria</taxon>
        <taxon>Bacillati</taxon>
        <taxon>Actinomycetota</taxon>
        <taxon>Actinomycetes</taxon>
        <taxon>Mycobacteriales</taxon>
        <taxon>Mycobacteriaceae</taxon>
        <taxon>Mycobacterium</taxon>
        <taxon>Mycobacterium ulcerans group</taxon>
    </lineage>
</organism>
<gene>
    <name evidence="1" type="primary">rpmG1</name>
    <name type="ordered locus">MMAR_0291</name>
</gene>
<evidence type="ECO:0000255" key="1">
    <source>
        <dbReference type="HAMAP-Rule" id="MF_00294"/>
    </source>
</evidence>
<dbReference type="EMBL" id="CP000854">
    <property type="protein sequence ID" value="ACC38758.1"/>
    <property type="molecule type" value="Genomic_DNA"/>
</dbReference>
<dbReference type="RefSeq" id="WP_011742330.1">
    <property type="nucleotide sequence ID" value="NC_010612.1"/>
</dbReference>
<dbReference type="SMR" id="B2HKQ3"/>
<dbReference type="STRING" id="216594.MMAR_0291"/>
<dbReference type="GeneID" id="93439326"/>
<dbReference type="KEGG" id="mmi:MMAR_0291"/>
<dbReference type="eggNOG" id="COG0267">
    <property type="taxonomic scope" value="Bacteria"/>
</dbReference>
<dbReference type="HOGENOM" id="CLU_190949_1_1_11"/>
<dbReference type="OrthoDB" id="21586at2"/>
<dbReference type="Proteomes" id="UP000001190">
    <property type="component" value="Chromosome"/>
</dbReference>
<dbReference type="GO" id="GO:0022625">
    <property type="term" value="C:cytosolic large ribosomal subunit"/>
    <property type="evidence" value="ECO:0007669"/>
    <property type="project" value="TreeGrafter"/>
</dbReference>
<dbReference type="GO" id="GO:0003735">
    <property type="term" value="F:structural constituent of ribosome"/>
    <property type="evidence" value="ECO:0007669"/>
    <property type="project" value="InterPro"/>
</dbReference>
<dbReference type="GO" id="GO:0006412">
    <property type="term" value="P:translation"/>
    <property type="evidence" value="ECO:0007669"/>
    <property type="project" value="UniProtKB-UniRule"/>
</dbReference>
<dbReference type="FunFam" id="2.20.28.120:FF:000002">
    <property type="entry name" value="50S ribosomal protein L33"/>
    <property type="match status" value="1"/>
</dbReference>
<dbReference type="Gene3D" id="2.20.28.120">
    <property type="entry name" value="Ribosomal protein L33"/>
    <property type="match status" value="1"/>
</dbReference>
<dbReference type="HAMAP" id="MF_00294">
    <property type="entry name" value="Ribosomal_bL33"/>
    <property type="match status" value="1"/>
</dbReference>
<dbReference type="InterPro" id="IPR001705">
    <property type="entry name" value="Ribosomal_bL33"/>
</dbReference>
<dbReference type="InterPro" id="IPR018264">
    <property type="entry name" value="Ribosomal_bL33_CS"/>
</dbReference>
<dbReference type="InterPro" id="IPR038584">
    <property type="entry name" value="Ribosomal_bL33_sf"/>
</dbReference>
<dbReference type="InterPro" id="IPR011332">
    <property type="entry name" value="Ribosomal_zn-bd"/>
</dbReference>
<dbReference type="NCBIfam" id="NF001860">
    <property type="entry name" value="PRK00595.1"/>
    <property type="match status" value="1"/>
</dbReference>
<dbReference type="NCBIfam" id="TIGR01023">
    <property type="entry name" value="rpmG_bact"/>
    <property type="match status" value="1"/>
</dbReference>
<dbReference type="PANTHER" id="PTHR15238">
    <property type="entry name" value="54S RIBOSOMAL PROTEIN L39, MITOCHONDRIAL"/>
    <property type="match status" value="1"/>
</dbReference>
<dbReference type="PANTHER" id="PTHR15238:SF1">
    <property type="entry name" value="LARGE RIBOSOMAL SUBUNIT PROTEIN BL33M"/>
    <property type="match status" value="1"/>
</dbReference>
<dbReference type="Pfam" id="PF00471">
    <property type="entry name" value="Ribosomal_L33"/>
    <property type="match status" value="1"/>
</dbReference>
<dbReference type="SUPFAM" id="SSF57829">
    <property type="entry name" value="Zn-binding ribosomal proteins"/>
    <property type="match status" value="1"/>
</dbReference>
<dbReference type="PROSITE" id="PS00582">
    <property type="entry name" value="RIBOSOMAL_L33"/>
    <property type="match status" value="1"/>
</dbReference>
<reference key="1">
    <citation type="journal article" date="2008" name="Genome Res.">
        <title>Insights from the complete genome sequence of Mycobacterium marinum on the evolution of Mycobacterium tuberculosis.</title>
        <authorList>
            <person name="Stinear T.P."/>
            <person name="Seemann T."/>
            <person name="Harrison P.F."/>
            <person name="Jenkin G.A."/>
            <person name="Davies J.K."/>
            <person name="Johnson P.D."/>
            <person name="Abdellah Z."/>
            <person name="Arrowsmith C."/>
            <person name="Chillingworth T."/>
            <person name="Churcher C."/>
            <person name="Clarke K."/>
            <person name="Cronin A."/>
            <person name="Davis P."/>
            <person name="Goodhead I."/>
            <person name="Holroyd N."/>
            <person name="Jagels K."/>
            <person name="Lord A."/>
            <person name="Moule S."/>
            <person name="Mungall K."/>
            <person name="Norbertczak H."/>
            <person name="Quail M.A."/>
            <person name="Rabbinowitsch E."/>
            <person name="Walker D."/>
            <person name="White B."/>
            <person name="Whitehead S."/>
            <person name="Small P.L."/>
            <person name="Brosch R."/>
            <person name="Ramakrishnan L."/>
            <person name="Fischbach M.A."/>
            <person name="Parkhill J."/>
            <person name="Cole S.T."/>
        </authorList>
    </citation>
    <scope>NUCLEOTIDE SEQUENCE [LARGE SCALE GENOMIC DNA]</scope>
    <source>
        <strain>ATCC BAA-535 / M</strain>
    </source>
</reference>
<protein>
    <recommendedName>
        <fullName evidence="1">Large ribosomal subunit protein bL33A</fullName>
    </recommendedName>
    <alternativeName>
        <fullName evidence="1">50S ribosomal protein L33 1</fullName>
    </alternativeName>
</protein>
<keyword id="KW-1185">Reference proteome</keyword>
<keyword id="KW-0687">Ribonucleoprotein</keyword>
<keyword id="KW-0689">Ribosomal protein</keyword>
<name>RL331_MYCMM</name>
<accession>B2HKQ3</accession>
<feature type="chain" id="PRO_0000356551" description="Large ribosomal subunit protein bL33A">
    <location>
        <begin position="1"/>
        <end position="54"/>
    </location>
</feature>
<sequence>MARNEIRPAVKLRSTAGTGYTYITRKNRRNDPDRLILSKYDPVIRKHVPFREER</sequence>